<sequence length="491" mass="52099">MTTDINGTALAVFIFFFVLVTVMGFVASRWRKPETLAHIDEWGLGGRNFGTWITWFLVGGDFYTAYTVIAVPALVYTVGAYGFFALPYTIVVYPFVFMVMPVLWKRAKDFGYVTAGDVVHGQYGSRGLELAVAATGVIATMPYIALQLVGMTAVLKALGLHGELPLAIAFIVLALYTYSAGLRAPALIAFVKDIMIYIVVIAAVALIPSKLGGYANVFASADAAFQAKGSGNLLLGGNQYVAYATLALGSALAAFMYPHTLTGIFASNSGKTIRKNAIMLPAYTLLLGLLALLGYMGHAANLKLDSANDVVPTLFKTLFSGWFSGFAFAAIAIGALVPAAVMSIGAANLFTRNFWKAYVDPDVSDAGEAKVAKITSLVVKVGALLVIIFLPTQFALDLQLLGGIWILQTLPALVFGLYTNWFRAPGLLAGWFVGFGGGTFLVWDAGWKPLHLISLGGEPFTVYTGLLALAANIAVAVVVNALLPAKAPVRA</sequence>
<dbReference type="EMBL" id="AJ421944">
    <property type="protein sequence ID" value="CAD19128.1"/>
    <property type="molecule type" value="Genomic_DNA"/>
</dbReference>
<dbReference type="EMBL" id="AM236084">
    <property type="protein sequence ID" value="CAK10630.1"/>
    <property type="molecule type" value="Genomic_DNA"/>
</dbReference>
<dbReference type="RefSeq" id="WP_011654429.1">
    <property type="nucleotide sequence ID" value="NC_008381.1"/>
</dbReference>
<dbReference type="SMR" id="Q1M7A2"/>
<dbReference type="TCDB" id="2.A.21.4.1">
    <property type="family name" value="the solute:sodium symporter (sss) family"/>
</dbReference>
<dbReference type="EnsemblBacteria" id="CAK10630">
    <property type="protein sequence ID" value="CAK10630"/>
    <property type="gene ID" value="pRL100404"/>
</dbReference>
<dbReference type="KEGG" id="rle:pRL100404"/>
<dbReference type="HOGENOM" id="CLU_018808_15_0_5"/>
<dbReference type="SABIO-RK" id="Q1M7A2"/>
<dbReference type="Proteomes" id="UP000006575">
    <property type="component" value="Plasmid pRL10"/>
</dbReference>
<dbReference type="GO" id="GO:0005886">
    <property type="term" value="C:plasma membrane"/>
    <property type="evidence" value="ECO:0007669"/>
    <property type="project" value="UniProtKB-SubCell"/>
</dbReference>
<dbReference type="GO" id="GO:0022857">
    <property type="term" value="F:transmembrane transporter activity"/>
    <property type="evidence" value="ECO:0007669"/>
    <property type="project" value="InterPro"/>
</dbReference>
<dbReference type="GO" id="GO:0006865">
    <property type="term" value="P:amino acid transport"/>
    <property type="evidence" value="ECO:0007669"/>
    <property type="project" value="UniProtKB-KW"/>
</dbReference>
<dbReference type="CDD" id="cd10322">
    <property type="entry name" value="SLC5sbd"/>
    <property type="match status" value="1"/>
</dbReference>
<dbReference type="Gene3D" id="1.20.1730.10">
    <property type="entry name" value="Sodium/glucose cotransporter"/>
    <property type="match status" value="1"/>
</dbReference>
<dbReference type="InterPro" id="IPR038377">
    <property type="entry name" value="Na/Glc_symporter_sf"/>
</dbReference>
<dbReference type="InterPro" id="IPR001734">
    <property type="entry name" value="Na/solute_symporter"/>
</dbReference>
<dbReference type="InterPro" id="IPR050277">
    <property type="entry name" value="Sodium:Solute_Symporter"/>
</dbReference>
<dbReference type="NCBIfam" id="NF046076">
    <property type="entry name" value="monocarbox_MctP"/>
    <property type="match status" value="1"/>
</dbReference>
<dbReference type="PANTHER" id="PTHR48086:SF8">
    <property type="entry name" value="MONOCARBOXYLIC ACID PERMEASE"/>
    <property type="match status" value="1"/>
</dbReference>
<dbReference type="PANTHER" id="PTHR48086">
    <property type="entry name" value="SODIUM/PROLINE SYMPORTER-RELATED"/>
    <property type="match status" value="1"/>
</dbReference>
<dbReference type="Pfam" id="PF00474">
    <property type="entry name" value="SSF"/>
    <property type="match status" value="1"/>
</dbReference>
<dbReference type="PROSITE" id="PS50283">
    <property type="entry name" value="NA_SOLUT_SYMP_3"/>
    <property type="match status" value="1"/>
</dbReference>
<proteinExistence type="evidence at protein level"/>
<gene>
    <name evidence="3" type="primary">mctP</name>
    <name evidence="5" type="ordered locus">pRL100404</name>
</gene>
<geneLocation type="plasmid" evidence="5">
    <name>pRL10</name>
</geneLocation>
<keyword id="KW-0029">Amino-acid transport</keyword>
<keyword id="KW-1003">Cell membrane</keyword>
<keyword id="KW-0472">Membrane</keyword>
<keyword id="KW-0614">Plasmid</keyword>
<keyword id="KW-0812">Transmembrane</keyword>
<keyword id="KW-1133">Transmembrane helix</keyword>
<keyword id="KW-0813">Transport</keyword>
<protein>
    <recommendedName>
        <fullName evidence="3">Monocarboxylate transport permease protein</fullName>
    </recommendedName>
</protein>
<organism>
    <name type="scientific">Rhizobium johnstonii (strain DSM 114642 / LMG 32736 / 3841)</name>
    <name type="common">Rhizobium leguminosarum bv. viciae</name>
    <dbReference type="NCBI Taxonomy" id="216596"/>
    <lineage>
        <taxon>Bacteria</taxon>
        <taxon>Pseudomonadati</taxon>
        <taxon>Pseudomonadota</taxon>
        <taxon>Alphaproteobacteria</taxon>
        <taxon>Hyphomicrobiales</taxon>
        <taxon>Rhizobiaceae</taxon>
        <taxon>Rhizobium/Agrobacterium group</taxon>
        <taxon>Rhizobium</taxon>
        <taxon>Rhizobium johnstonii</taxon>
    </lineage>
</organism>
<reference key="1">
    <citation type="journal article" date="2002" name="J. Bacteriol.">
        <title>A monocarboxylate permease of Rhizobium leguminosarum is the first member of a new subfamily of transporters.</title>
        <authorList>
            <person name="Hosie A.H."/>
            <person name="Allaway D."/>
            <person name="Poole P.S."/>
        </authorList>
    </citation>
    <scope>NUCLEOTIDE SEQUENCE [GENOMIC DNA]</scope>
    <scope>FUNCTION</scope>
    <scope>ACTIVITY REGULATION</scope>
    <scope>BIOPHYSICOCHEMICAL PROPERTIES</scope>
    <scope>INDUCTION</scope>
    <source>
        <strain>DSM 114642 / LMG 32736 / 3841</strain>
    </source>
</reference>
<reference key="2">
    <citation type="journal article" date="2006" name="Genome Biol.">
        <title>The genome of Rhizobium leguminosarum has recognizable core and accessory components.</title>
        <authorList>
            <person name="Young J.P.W."/>
            <person name="Crossman L.C."/>
            <person name="Johnston A.W.B."/>
            <person name="Thomson N.R."/>
            <person name="Ghazoui Z.F."/>
            <person name="Hull K.H."/>
            <person name="Wexler M."/>
            <person name="Curson A.R.J."/>
            <person name="Todd J.D."/>
            <person name="Poole P.S."/>
            <person name="Mauchline T.H."/>
            <person name="East A.K."/>
            <person name="Quail M.A."/>
            <person name="Churcher C."/>
            <person name="Arrowsmith C."/>
            <person name="Cherevach I."/>
            <person name="Chillingworth T."/>
            <person name="Clarke K."/>
            <person name="Cronin A."/>
            <person name="Davis P."/>
            <person name="Fraser A."/>
            <person name="Hance Z."/>
            <person name="Hauser H."/>
            <person name="Jagels K."/>
            <person name="Moule S."/>
            <person name="Mungall K."/>
            <person name="Norbertczak H."/>
            <person name="Rabbinowitsch E."/>
            <person name="Sanders M."/>
            <person name="Simmonds M."/>
            <person name="Whitehead S."/>
            <person name="Parkhill J."/>
        </authorList>
    </citation>
    <scope>NUCLEOTIDE SEQUENCE [LARGE SCALE GENOMIC DNA]</scope>
    <source>
        <strain>DSM 114642 / LMG 32736 / 3841</strain>
    </source>
</reference>
<comment type="function">
    <text evidence="2">Low-affinity transporter of alanine and high-affinity transporter of lactate and pyruvate. Can also transport other monocarboxylates such as propionate, butyrate, alpha-hydroxybutyrate or acetate. May be proton coupled. Required for optimal growth on alanine or pyruvate and ammonia.</text>
</comment>
<comment type="activity regulation">
    <text evidence="2">Inhibited by CCCP, but is apparently not affected by the concentration of sodium.</text>
</comment>
<comment type="biophysicochemical properties">
    <kinetics>
        <KM evidence="2">0.56 mM for alanine</KM>
        <KM evidence="2">4.4 uM for lactate</KM>
        <KM evidence="2">3.8 uM for pyruvate</KM>
        <Vmax evidence="2">122.0 nmol/min/mg enzyme with alanine as substrate</Vmax>
        <Vmax evidence="2">22.4 nmol/min/mg enzyme with lactate as substrate</Vmax>
        <Vmax evidence="2">9.8 nmol/min/mg enzyme with pyruvate as substrate</Vmax>
    </kinetics>
</comment>
<comment type="subcellular location">
    <subcellularLocation>
        <location evidence="4">Cell membrane</location>
        <topology evidence="1">Multi-pass membrane protein</topology>
    </subcellularLocation>
</comment>
<comment type="induction">
    <text evidence="2">Transcriptionally regulated by the two-component regulatory system MctS/MctR.</text>
</comment>
<comment type="similarity">
    <text evidence="4">Belongs to the sodium:solute symporter (SSF) (TC 2.A.21) family.</text>
</comment>
<feature type="chain" id="PRO_0000430566" description="Monocarboxylate transport permease protein">
    <location>
        <begin position="1"/>
        <end position="491"/>
    </location>
</feature>
<feature type="transmembrane region" description="Helical" evidence="1">
    <location>
        <begin position="7"/>
        <end position="27"/>
    </location>
</feature>
<feature type="transmembrane region" description="Helical" evidence="1">
    <location>
        <begin position="55"/>
        <end position="75"/>
    </location>
</feature>
<feature type="transmembrane region" description="Helical" evidence="1">
    <location>
        <begin position="83"/>
        <end position="103"/>
    </location>
</feature>
<feature type="transmembrane region" description="Helical" evidence="1">
    <location>
        <begin position="130"/>
        <end position="150"/>
    </location>
</feature>
<feature type="transmembrane region" description="Helical" evidence="1">
    <location>
        <begin position="157"/>
        <end position="177"/>
    </location>
</feature>
<feature type="transmembrane region" description="Helical" evidence="1">
    <location>
        <begin position="187"/>
        <end position="207"/>
    </location>
</feature>
<feature type="transmembrane region" description="Helical" evidence="1">
    <location>
        <begin position="246"/>
        <end position="266"/>
    </location>
</feature>
<feature type="transmembrane region" description="Helical" evidence="1">
    <location>
        <begin position="277"/>
        <end position="297"/>
    </location>
</feature>
<feature type="transmembrane region" description="Helical" evidence="1">
    <location>
        <begin position="322"/>
        <end position="342"/>
    </location>
</feature>
<feature type="transmembrane region" description="Helical" evidence="1">
    <location>
        <begin position="374"/>
        <end position="396"/>
    </location>
</feature>
<feature type="transmembrane region" description="Helical" evidence="1">
    <location>
        <begin position="400"/>
        <end position="422"/>
    </location>
</feature>
<feature type="transmembrane region" description="Helical" evidence="1">
    <location>
        <begin position="427"/>
        <end position="447"/>
    </location>
</feature>
<feature type="transmembrane region" description="Helical" evidence="1">
    <location>
        <begin position="465"/>
        <end position="485"/>
    </location>
</feature>
<feature type="sequence conflict" description="In Ref. 1; CAD19128." evidence="4" ref="1">
    <original>SG</original>
    <variation>FR</variation>
    <location>
        <begin position="324"/>
        <end position="325"/>
    </location>
</feature>
<evidence type="ECO:0000255" key="1"/>
<evidence type="ECO:0000269" key="2">
    <source>
    </source>
</evidence>
<evidence type="ECO:0000303" key="3">
    <source>
    </source>
</evidence>
<evidence type="ECO:0000305" key="4"/>
<evidence type="ECO:0000312" key="5">
    <source>
        <dbReference type="EMBL" id="CAK10630.1"/>
    </source>
</evidence>
<name>MCTP_RHIJ3</name>
<accession>Q1M7A2</accession>
<accession>Q8VM88</accession>